<feature type="chain" id="PRO_1000191479" description="Lipid-A-disaccharide synthase">
    <location>
        <begin position="1"/>
        <end position="382"/>
    </location>
</feature>
<comment type="function">
    <text evidence="1">Condensation of UDP-2,3-diacylglucosamine and 2,3-diacylglucosamine-1-phosphate to form lipid A disaccharide, a precursor of lipid A, a phosphorylated glycolipid that anchors the lipopolysaccharide to the outer membrane of the cell.</text>
</comment>
<comment type="catalytic activity">
    <reaction evidence="1">
        <text>2-N,3-O-bis[(3R)-3-hydroxytetradecanoyl]-alpha-D-glucosaminyl 1-phosphate + UDP-2-N,3-O-bis[(3R)-3-hydroxytetradecanoyl]-alpha-D-glucosamine = lipid A disaccharide (E. coli) + UDP + H(+)</text>
        <dbReference type="Rhea" id="RHEA:22668"/>
        <dbReference type="ChEBI" id="CHEBI:15378"/>
        <dbReference type="ChEBI" id="CHEBI:57957"/>
        <dbReference type="ChEBI" id="CHEBI:58223"/>
        <dbReference type="ChEBI" id="CHEBI:58466"/>
        <dbReference type="ChEBI" id="CHEBI:78847"/>
    </reaction>
</comment>
<comment type="catalytic activity">
    <reaction evidence="1">
        <text>a lipid X + a UDP-2-N,3-O-bis[(3R)-3-hydroxyacyl]-alpha-D-glucosamine = a lipid A disaccharide + UDP + H(+)</text>
        <dbReference type="Rhea" id="RHEA:67828"/>
        <dbReference type="ChEBI" id="CHEBI:15378"/>
        <dbReference type="ChEBI" id="CHEBI:58223"/>
        <dbReference type="ChEBI" id="CHEBI:137748"/>
        <dbReference type="ChEBI" id="CHEBI:176338"/>
        <dbReference type="ChEBI" id="CHEBI:176343"/>
        <dbReference type="EC" id="2.4.1.182"/>
    </reaction>
</comment>
<comment type="pathway">
    <text evidence="1">Glycolipid biosynthesis; lipid IV(A) biosynthesis; lipid IV(A) from (3R)-3-hydroxytetradecanoyl-[acyl-carrier-protein] and UDP-N-acetyl-alpha-D-glucosamine: step 5/6.</text>
</comment>
<comment type="similarity">
    <text evidence="1">Belongs to the LpxB family.</text>
</comment>
<name>LPXB_ECO5E</name>
<reference key="1">
    <citation type="journal article" date="2011" name="Proc. Natl. Acad. Sci. U.S.A.">
        <title>Genomic anatomy of Escherichia coli O157:H7 outbreaks.</title>
        <authorList>
            <person name="Eppinger M."/>
            <person name="Mammel M.K."/>
            <person name="Leclerc J.E."/>
            <person name="Ravel J."/>
            <person name="Cebula T.A."/>
        </authorList>
    </citation>
    <scope>NUCLEOTIDE SEQUENCE [LARGE SCALE GENOMIC DNA]</scope>
    <source>
        <strain>EC4115 / EHEC</strain>
    </source>
</reference>
<gene>
    <name evidence="1" type="primary">lpxB</name>
    <name type="ordered locus">ECH74115_0192</name>
</gene>
<dbReference type="EC" id="2.4.1.182" evidence="1"/>
<dbReference type="EMBL" id="CP001164">
    <property type="protein sequence ID" value="ACI38815.1"/>
    <property type="molecule type" value="Genomic_DNA"/>
</dbReference>
<dbReference type="RefSeq" id="WP_000139661.1">
    <property type="nucleotide sequence ID" value="NC_011353.1"/>
</dbReference>
<dbReference type="SMR" id="B5Z0G1"/>
<dbReference type="CAZy" id="GT19">
    <property type="family name" value="Glycosyltransferase Family 19"/>
</dbReference>
<dbReference type="KEGG" id="ecf:ECH74115_0192"/>
<dbReference type="HOGENOM" id="CLU_036577_3_0_6"/>
<dbReference type="UniPathway" id="UPA00359">
    <property type="reaction ID" value="UER00481"/>
</dbReference>
<dbReference type="GO" id="GO:0016020">
    <property type="term" value="C:membrane"/>
    <property type="evidence" value="ECO:0007669"/>
    <property type="project" value="GOC"/>
</dbReference>
<dbReference type="GO" id="GO:0008915">
    <property type="term" value="F:lipid-A-disaccharide synthase activity"/>
    <property type="evidence" value="ECO:0007669"/>
    <property type="project" value="UniProtKB-UniRule"/>
</dbReference>
<dbReference type="GO" id="GO:0005543">
    <property type="term" value="F:phospholipid binding"/>
    <property type="evidence" value="ECO:0007669"/>
    <property type="project" value="TreeGrafter"/>
</dbReference>
<dbReference type="GO" id="GO:0009245">
    <property type="term" value="P:lipid A biosynthetic process"/>
    <property type="evidence" value="ECO:0007669"/>
    <property type="project" value="UniProtKB-UniRule"/>
</dbReference>
<dbReference type="CDD" id="cd01635">
    <property type="entry name" value="Glycosyltransferase_GTB-type"/>
    <property type="match status" value="1"/>
</dbReference>
<dbReference type="HAMAP" id="MF_00392">
    <property type="entry name" value="LpxB"/>
    <property type="match status" value="1"/>
</dbReference>
<dbReference type="InterPro" id="IPR003835">
    <property type="entry name" value="Glyco_trans_19"/>
</dbReference>
<dbReference type="NCBIfam" id="TIGR00215">
    <property type="entry name" value="lpxB"/>
    <property type="match status" value="1"/>
</dbReference>
<dbReference type="PANTHER" id="PTHR30372">
    <property type="entry name" value="LIPID-A-DISACCHARIDE SYNTHASE"/>
    <property type="match status" value="1"/>
</dbReference>
<dbReference type="PANTHER" id="PTHR30372:SF4">
    <property type="entry name" value="LIPID-A-DISACCHARIDE SYNTHASE, MITOCHONDRIAL-RELATED"/>
    <property type="match status" value="1"/>
</dbReference>
<dbReference type="Pfam" id="PF02684">
    <property type="entry name" value="LpxB"/>
    <property type="match status" value="1"/>
</dbReference>
<dbReference type="SUPFAM" id="SSF53756">
    <property type="entry name" value="UDP-Glycosyltransferase/glycogen phosphorylase"/>
    <property type="match status" value="1"/>
</dbReference>
<proteinExistence type="inferred from homology"/>
<keyword id="KW-0328">Glycosyltransferase</keyword>
<keyword id="KW-0441">Lipid A biosynthesis</keyword>
<keyword id="KW-0444">Lipid biosynthesis</keyword>
<keyword id="KW-0443">Lipid metabolism</keyword>
<keyword id="KW-0808">Transferase</keyword>
<accession>B5Z0G1</accession>
<organism>
    <name type="scientific">Escherichia coli O157:H7 (strain EC4115 / EHEC)</name>
    <dbReference type="NCBI Taxonomy" id="444450"/>
    <lineage>
        <taxon>Bacteria</taxon>
        <taxon>Pseudomonadati</taxon>
        <taxon>Pseudomonadota</taxon>
        <taxon>Gammaproteobacteria</taxon>
        <taxon>Enterobacterales</taxon>
        <taxon>Enterobacteriaceae</taxon>
        <taxon>Escherichia</taxon>
    </lineage>
</organism>
<protein>
    <recommendedName>
        <fullName evidence="1">Lipid-A-disaccharide synthase</fullName>
        <ecNumber evidence="1">2.4.1.182</ecNumber>
    </recommendedName>
</protein>
<evidence type="ECO:0000255" key="1">
    <source>
        <dbReference type="HAMAP-Rule" id="MF_00392"/>
    </source>
</evidence>
<sequence>MTEQRPLTIALVAGETSGDILGAGLIRALKERVPNARFVGVAGPRMQAEGCEAWYEMEELAVMGIVEVLGRLRRLLHIRADLTKRFGELKPDVFVGIDAPDFNIILEGNLKKQGIKTIHYVSPSVWAWRQKRVFKIGRATDLVLAFLPFEKAFYDKYNVPCRFIGHTMADAMPLDPDKNSARDVLGIPYDAHCLALLPGSRGAEVEMLSADFLKTAQLLRQTYPDLEIVVPLVNAKRREQFERIKAAVAPDLSVHLLDGMGREAMVASDAALLASGTAALECMLAKCPMVVGYRMKPFTFWLAKRLVKTDYVSLPNLLAGRELVKELLQEECEPQKLAAALLPLLANGKTSHAMHDTFRELHQQIRCNADEQAAQAVLELAQ</sequence>